<gene>
    <name type="primary">ATP25</name>
    <name type="ORF">PGUG_00041</name>
</gene>
<protein>
    <recommendedName>
        <fullName>ATPase synthesis protein 25, mitochondrial</fullName>
    </recommendedName>
</protein>
<accession>A5D9T6</accession>
<keyword id="KW-0472">Membrane</keyword>
<keyword id="KW-0496">Mitochondrion</keyword>
<keyword id="KW-0999">Mitochondrion inner membrane</keyword>
<keyword id="KW-1185">Reference proteome</keyword>
<keyword id="KW-0809">Transit peptide</keyword>
<proteinExistence type="inferred from homology"/>
<feature type="transit peptide" description="Mitochondrion" evidence="2">
    <location>
        <begin position="1"/>
        <end position="32"/>
    </location>
</feature>
<feature type="chain" id="PRO_0000404484" description="ATPase synthesis protein 25, mitochondrial">
    <location>
        <begin position="33"/>
        <end position="575"/>
    </location>
</feature>
<dbReference type="EMBL" id="CH408155">
    <property type="protein sequence ID" value="EDK35943.2"/>
    <property type="molecule type" value="Genomic_DNA"/>
</dbReference>
<dbReference type="RefSeq" id="XP_001486664.1">
    <property type="nucleotide sequence ID" value="XM_001486614.1"/>
</dbReference>
<dbReference type="SMR" id="A5D9T6"/>
<dbReference type="STRING" id="294746.A5D9T6"/>
<dbReference type="GeneID" id="5129420"/>
<dbReference type="KEGG" id="pgu:PGUG_00041"/>
<dbReference type="VEuPathDB" id="FungiDB:PGUG_00041"/>
<dbReference type="eggNOG" id="ENOG502RGZN">
    <property type="taxonomic scope" value="Eukaryota"/>
</dbReference>
<dbReference type="HOGENOM" id="CLU_454918_0_0_1"/>
<dbReference type="InParanoid" id="A5D9T6"/>
<dbReference type="OMA" id="WLREQMM"/>
<dbReference type="OrthoDB" id="107372at2759"/>
<dbReference type="Proteomes" id="UP000001997">
    <property type="component" value="Unassembled WGS sequence"/>
</dbReference>
<dbReference type="GO" id="GO:0005743">
    <property type="term" value="C:mitochondrial inner membrane"/>
    <property type="evidence" value="ECO:0007669"/>
    <property type="project" value="UniProtKB-SubCell"/>
</dbReference>
<dbReference type="GO" id="GO:0140053">
    <property type="term" value="P:mitochondrial gene expression"/>
    <property type="evidence" value="ECO:0007669"/>
    <property type="project" value="InterPro"/>
</dbReference>
<dbReference type="GO" id="GO:0048255">
    <property type="term" value="P:mRNA stabilization"/>
    <property type="evidence" value="ECO:0007669"/>
    <property type="project" value="TreeGrafter"/>
</dbReference>
<dbReference type="Gene3D" id="3.30.460.10">
    <property type="entry name" value="Beta Polymerase, domain 2"/>
    <property type="match status" value="1"/>
</dbReference>
<dbReference type="InterPro" id="IPR040152">
    <property type="entry name" value="Atp25"/>
</dbReference>
<dbReference type="InterPro" id="IPR043519">
    <property type="entry name" value="NT_sf"/>
</dbReference>
<dbReference type="PANTHER" id="PTHR28087">
    <property type="entry name" value="ATPASE SYNTHESIS PROTEIN 25, MITOCHONDRIAL"/>
    <property type="match status" value="1"/>
</dbReference>
<dbReference type="PANTHER" id="PTHR28087:SF1">
    <property type="entry name" value="ATPASE SYNTHESIS PROTEIN 25, MITOCHONDRIAL"/>
    <property type="match status" value="1"/>
</dbReference>
<dbReference type="Pfam" id="PF02410">
    <property type="entry name" value="RsfS"/>
    <property type="match status" value="1"/>
</dbReference>
<dbReference type="SUPFAM" id="SSF81301">
    <property type="entry name" value="Nucleotidyltransferase"/>
    <property type="match status" value="1"/>
</dbReference>
<evidence type="ECO:0000250" key="1"/>
<evidence type="ECO:0000255" key="2"/>
<evidence type="ECO:0000305" key="3"/>
<sequence length="575" mass="65777">MLSNIWRRPKRLSFRYLAPIAHRSIAQTKNLVTKPENIRNTEGSENNDTVQSELPWYLRDDAASPLAETAQVELPEVPESAPKTINSFLELVAKDYGFDNLVFFDMTQLDSDHDYSTHHQPAKYILIASGKSEKHIMKAASQLRIHIKHTYDHLPSIEGMVTGGTSPRARRRMLRRSRKGPMATDNEYGKAANSWVMCETGVDGLFIHMLTADRRQELNLESLWCREEDAWRYEQQPAKAENSDHIFSGVRRFHTMGPFYMATKGKPLQKLLNSDSSIPGVELKGLISDFEKSGDSTSKFEFYRIIHLLDPNLVSLKSLANILISSKIPKIEAVVAYMKVLMDSQEIAAPEQTTAAMNESVDTRLDFLSQFVSDIYAYSGEQIELVGHPELVPLLWNLTVVNLKPHVIGSRTIDEAIHNEIEKEHFGNYPSVHIASNRNRDIYDLISSYNEAHSLTPTTSFKEMVLFTYGNAGKWDKFWSTFEVSFNLLNDQEHQTMTKWLRLVVYLDLRNDPVAINTFLNKYWSRSFPSSVTDLETRNFESEKEKDLFKTTIQSILQKVETPTSAEIQTTIDRL</sequence>
<comment type="function">
    <text evidence="1">Probable mitochondrial mRNA stabilization factor.</text>
</comment>
<comment type="subcellular location">
    <subcellularLocation>
        <location evidence="1">Mitochondrion inner membrane</location>
        <topology evidence="1">Peripheral membrane protein</topology>
        <orientation evidence="1">Matrix side</orientation>
    </subcellularLocation>
</comment>
<comment type="similarity">
    <text evidence="3">Belongs to the ATP25 family.</text>
</comment>
<organism>
    <name type="scientific">Meyerozyma guilliermondii (strain ATCC 6260 / CBS 566 / DSM 6381 / JCM 1539 / NBRC 10279 / NRRL Y-324)</name>
    <name type="common">Yeast</name>
    <name type="synonym">Candida guilliermondii</name>
    <dbReference type="NCBI Taxonomy" id="294746"/>
    <lineage>
        <taxon>Eukaryota</taxon>
        <taxon>Fungi</taxon>
        <taxon>Dikarya</taxon>
        <taxon>Ascomycota</taxon>
        <taxon>Saccharomycotina</taxon>
        <taxon>Pichiomycetes</taxon>
        <taxon>Debaryomycetaceae</taxon>
        <taxon>Meyerozyma</taxon>
    </lineage>
</organism>
<reference key="1">
    <citation type="journal article" date="2009" name="Nature">
        <title>Evolution of pathogenicity and sexual reproduction in eight Candida genomes.</title>
        <authorList>
            <person name="Butler G."/>
            <person name="Rasmussen M.D."/>
            <person name="Lin M.F."/>
            <person name="Santos M.A.S."/>
            <person name="Sakthikumar S."/>
            <person name="Munro C.A."/>
            <person name="Rheinbay E."/>
            <person name="Grabherr M."/>
            <person name="Forche A."/>
            <person name="Reedy J.L."/>
            <person name="Agrafioti I."/>
            <person name="Arnaud M.B."/>
            <person name="Bates S."/>
            <person name="Brown A.J.P."/>
            <person name="Brunke S."/>
            <person name="Costanzo M.C."/>
            <person name="Fitzpatrick D.A."/>
            <person name="de Groot P.W.J."/>
            <person name="Harris D."/>
            <person name="Hoyer L.L."/>
            <person name="Hube B."/>
            <person name="Klis F.M."/>
            <person name="Kodira C."/>
            <person name="Lennard N."/>
            <person name="Logue M.E."/>
            <person name="Martin R."/>
            <person name="Neiman A.M."/>
            <person name="Nikolaou E."/>
            <person name="Quail M.A."/>
            <person name="Quinn J."/>
            <person name="Santos M.C."/>
            <person name="Schmitzberger F.F."/>
            <person name="Sherlock G."/>
            <person name="Shah P."/>
            <person name="Silverstein K.A.T."/>
            <person name="Skrzypek M.S."/>
            <person name="Soll D."/>
            <person name="Staggs R."/>
            <person name="Stansfield I."/>
            <person name="Stumpf M.P.H."/>
            <person name="Sudbery P.E."/>
            <person name="Srikantha T."/>
            <person name="Zeng Q."/>
            <person name="Berman J."/>
            <person name="Berriman M."/>
            <person name="Heitman J."/>
            <person name="Gow N.A.R."/>
            <person name="Lorenz M.C."/>
            <person name="Birren B.W."/>
            <person name="Kellis M."/>
            <person name="Cuomo C.A."/>
        </authorList>
    </citation>
    <scope>NUCLEOTIDE SEQUENCE [LARGE SCALE GENOMIC DNA]</scope>
    <source>
        <strain>ATCC 6260 / CBS 566 / DSM 6381 / JCM 1539 / NBRC 10279 / NRRL Y-324</strain>
    </source>
</reference>
<name>ATP25_PICGU</name>